<accession>Q6YFQ1</accession>
<feature type="chain" id="PRO_0000194923" description="Cytochrome c oxidase subunit 6B2">
    <location>
        <begin position="1"/>
        <end position="88"/>
    </location>
</feature>
<feature type="domain" description="CHCH" evidence="3">
    <location>
        <begin position="29"/>
        <end position="75"/>
    </location>
</feature>
<feature type="region of interest" description="Disordered" evidence="4">
    <location>
        <begin position="1"/>
        <end position="21"/>
    </location>
</feature>
<feature type="short sequence motif" description="Cx9C motif" evidence="3">
    <location>
        <begin position="32"/>
        <end position="42"/>
    </location>
</feature>
<feature type="short sequence motif" description="Cx10C motif" evidence="3">
    <location>
        <begin position="56"/>
        <end position="67"/>
    </location>
</feature>
<feature type="disulfide bond" evidence="3">
    <location>
        <begin position="32"/>
        <end position="67"/>
    </location>
</feature>
<feature type="disulfide bond" evidence="3">
    <location>
        <begin position="42"/>
        <end position="56"/>
    </location>
</feature>
<sequence length="88" mass="10472">MLGVQAQMPAPGQWTTPPFDPRFPNQNQTRNCYQNFLDYHRCVKTMDRRGKNTQACDYYFRVFHSLCPVSWVQRWNEQIKQGTFPGKI</sequence>
<dbReference type="EMBL" id="AY152399">
    <property type="protein sequence ID" value="AAN46752.1"/>
    <property type="molecule type" value="mRNA"/>
</dbReference>
<dbReference type="RefSeq" id="NP_001034174.1">
    <property type="nucleotide sequence ID" value="NM_001039085.1"/>
</dbReference>
<dbReference type="SMR" id="Q6YFQ1"/>
<dbReference type="FunCoup" id="Q6YFQ1">
    <property type="interactions" value="957"/>
</dbReference>
<dbReference type="STRING" id="10116.ENSRNOP00000035591"/>
<dbReference type="PhosphoSitePlus" id="Q6YFQ1"/>
<dbReference type="PaxDb" id="10116-ENSRNOP00000035591"/>
<dbReference type="GeneID" id="654441"/>
<dbReference type="KEGG" id="rno:654441"/>
<dbReference type="UCSC" id="RGD:1591896">
    <property type="organism name" value="rat"/>
</dbReference>
<dbReference type="AGR" id="RGD:1591896"/>
<dbReference type="CTD" id="125965"/>
<dbReference type="RGD" id="1591896">
    <property type="gene designation" value="Cox6b2"/>
</dbReference>
<dbReference type="eggNOG" id="KOG3057">
    <property type="taxonomic scope" value="Eukaryota"/>
</dbReference>
<dbReference type="HOGENOM" id="CLU_133964_3_1_1"/>
<dbReference type="InParanoid" id="Q6YFQ1"/>
<dbReference type="OrthoDB" id="1107506at2759"/>
<dbReference type="PhylomeDB" id="Q6YFQ1"/>
<dbReference type="TreeFam" id="TF105065"/>
<dbReference type="Reactome" id="R-RNO-5628897">
    <property type="pathway name" value="TP53 Regulates Metabolic Genes"/>
</dbReference>
<dbReference type="Reactome" id="R-RNO-611105">
    <property type="pathway name" value="Respiratory electron transport"/>
</dbReference>
<dbReference type="Reactome" id="R-RNO-9707564">
    <property type="pathway name" value="Cytoprotection by HMOX1"/>
</dbReference>
<dbReference type="UniPathway" id="UPA00705"/>
<dbReference type="PRO" id="PR:Q6YFQ1"/>
<dbReference type="Proteomes" id="UP000002494">
    <property type="component" value="Chromosome 1"/>
</dbReference>
<dbReference type="Bgee" id="ENSRNOG00000038616">
    <property type="expression patterns" value="Expressed in testis and 20 other cell types or tissues"/>
</dbReference>
<dbReference type="GO" id="GO:0030061">
    <property type="term" value="C:mitochondrial crista"/>
    <property type="evidence" value="ECO:0000266"/>
    <property type="project" value="RGD"/>
</dbReference>
<dbReference type="GO" id="GO:0005739">
    <property type="term" value="C:mitochondrion"/>
    <property type="evidence" value="ECO:0000318"/>
    <property type="project" value="GO_Central"/>
</dbReference>
<dbReference type="GO" id="GO:0045277">
    <property type="term" value="C:respiratory chain complex IV"/>
    <property type="evidence" value="ECO:0007669"/>
    <property type="project" value="InterPro"/>
</dbReference>
<dbReference type="GO" id="GO:0006119">
    <property type="term" value="P:oxidative phosphorylation"/>
    <property type="evidence" value="ECO:0007669"/>
    <property type="project" value="UniProtKB-UniPathway"/>
</dbReference>
<dbReference type="CDD" id="cd00926">
    <property type="entry name" value="Cyt_c_Oxidase_VIb"/>
    <property type="match status" value="1"/>
</dbReference>
<dbReference type="FunFam" id="1.10.10.140:FF:000005">
    <property type="entry name" value="Cytochrome c oxidase subunit"/>
    <property type="match status" value="1"/>
</dbReference>
<dbReference type="Gene3D" id="1.10.10.140">
    <property type="entry name" value="Cytochrome c oxidase, subunit VIb"/>
    <property type="match status" value="1"/>
</dbReference>
<dbReference type="InterPro" id="IPR048280">
    <property type="entry name" value="COX6B-like"/>
</dbReference>
<dbReference type="InterPro" id="IPR036549">
    <property type="entry name" value="CX6/COA6-like_sf"/>
</dbReference>
<dbReference type="InterPro" id="IPR003213">
    <property type="entry name" value="Cyt_c_oxidase_su6B"/>
</dbReference>
<dbReference type="PANTHER" id="PTHR11387">
    <property type="entry name" value="CYTOCHROME C OXIDASE SUBUNIT 6B"/>
    <property type="match status" value="1"/>
</dbReference>
<dbReference type="Pfam" id="PF02297">
    <property type="entry name" value="COX6B"/>
    <property type="match status" value="1"/>
</dbReference>
<dbReference type="PIRSF" id="PIRSF000278">
    <property type="entry name" value="Cyt_c_oxidase_6B"/>
    <property type="match status" value="1"/>
</dbReference>
<dbReference type="SUPFAM" id="SSF47694">
    <property type="entry name" value="Cytochrome c oxidase subunit h"/>
    <property type="match status" value="1"/>
</dbReference>
<dbReference type="PROSITE" id="PS51808">
    <property type="entry name" value="CHCH"/>
    <property type="match status" value="1"/>
</dbReference>
<evidence type="ECO:0000250" key="1">
    <source>
        <dbReference type="UniProtKB" id="P00429"/>
    </source>
</evidence>
<evidence type="ECO:0000250" key="2">
    <source>
        <dbReference type="UniProtKB" id="Q01519"/>
    </source>
</evidence>
<evidence type="ECO:0000255" key="3">
    <source>
        <dbReference type="PROSITE-ProRule" id="PRU01150"/>
    </source>
</evidence>
<evidence type="ECO:0000256" key="4">
    <source>
        <dbReference type="SAM" id="MobiDB-lite"/>
    </source>
</evidence>
<evidence type="ECO:0000269" key="5">
    <source>
    </source>
</evidence>
<evidence type="ECO:0000305" key="6"/>
<gene>
    <name type="primary">Cox6b2</name>
</gene>
<reference key="1">
    <citation type="journal article" date="2003" name="Mol. Reprod. Dev.">
        <title>Cytochrome c oxidase of mammals contains a testes-specific isoform of subunit VIb -- the counterpart to testes-specific cytochrome c?</title>
        <authorList>
            <person name="Huttemann M."/>
            <person name="Jaradat S."/>
            <person name="Grossman L.I."/>
        </authorList>
    </citation>
    <scope>NUCLEOTIDE SEQUENCE [MRNA]</scope>
    <scope>TISSUE SPECIFICITY</scope>
    <source>
        <tissue>Testis</tissue>
    </source>
</reference>
<keyword id="KW-1015">Disulfide bond</keyword>
<keyword id="KW-0472">Membrane</keyword>
<keyword id="KW-0496">Mitochondrion</keyword>
<keyword id="KW-0999">Mitochondrion inner membrane</keyword>
<keyword id="KW-1185">Reference proteome</keyword>
<protein>
    <recommendedName>
        <fullName>Cytochrome c oxidase subunit 6B2</fullName>
    </recommendedName>
    <alternativeName>
        <fullName>Cytochrome c oxidase subunit VIb isoform 2</fullName>
        <shortName>COX VIb-2</shortName>
    </alternativeName>
    <alternativeName>
        <fullName>Cytochrome c oxidase subunit VIb, testis-specific isoform</fullName>
    </alternativeName>
</protein>
<name>CX6B2_RAT</name>
<organism>
    <name type="scientific">Rattus norvegicus</name>
    <name type="common">Rat</name>
    <dbReference type="NCBI Taxonomy" id="10116"/>
    <lineage>
        <taxon>Eukaryota</taxon>
        <taxon>Metazoa</taxon>
        <taxon>Chordata</taxon>
        <taxon>Craniata</taxon>
        <taxon>Vertebrata</taxon>
        <taxon>Euteleostomi</taxon>
        <taxon>Mammalia</taxon>
        <taxon>Eutheria</taxon>
        <taxon>Euarchontoglires</taxon>
        <taxon>Glires</taxon>
        <taxon>Rodentia</taxon>
        <taxon>Myomorpha</taxon>
        <taxon>Muroidea</taxon>
        <taxon>Muridae</taxon>
        <taxon>Murinae</taxon>
        <taxon>Rattus</taxon>
    </lineage>
</organism>
<comment type="function">
    <text evidence="2">Component of the cytochrome c oxidase, the last enzyme in the mitochondrial electron transport chain which drives oxidative phosphorylation. The respiratory chain contains 3 multisubunit complexes succinate dehydrogenase (complex II, CII), ubiquinol-cytochrome c oxidoreductase (cytochrome b-c1 complex, complex III, CIII) and cytochrome c oxidase (complex IV, CIV), that cooperate to transfer electrons derived from NADH and succinate to molecular oxygen, creating an electrochemical gradient over the inner membrane that drives transmembrane transport and the ATP synthase. Cytochrome c oxidase is the component of the respiratory chain that catalyzes the reduction of oxygen to water. Electrons originating from reduced cytochrome c in the intermembrane space (IMS) are transferred via the dinuclear copper A center (CU(A)) of subunit 2 and heme A of subunit 1 to the active site in subunit 1, a binuclear center (BNC) formed by heme A3 and copper B (CU(B)). The BNC reduces molecular oxygen to 2 water molecules using 4 electrons from cytochrome c in the IMS and 4 protons from the mitochondrial matrix.</text>
</comment>
<comment type="pathway">
    <text evidence="2">Energy metabolism; oxidative phosphorylation.</text>
</comment>
<comment type="subunit">
    <text evidence="1">Component of the cytochrome c oxidase (complex IV, CIV), a multisubunit enzyme composed of 14 subunits. The complex is composed of a catalytic core of 3 subunits MT-CO1, MT-CO2 and MT-CO3, encoded in the mitochondrial DNA, and 11 supernumerary subunits COX4I, COX5A, COX5B, COX6A, COX6B, COX6C, COX7A, COX7B, COX7C, COX8 and NDUFA4, which are encoded in the nuclear genome. The complex exists as a monomer or a dimer and forms supercomplexes (SCs) in the inner mitochondrial membrane with NADH-ubiquinone oxidoreductase (complex I, CI) and ubiquinol-cytochrome c oxidoreductase (cytochrome b-c1 complex, complex III, CIII), resulting in different assemblies (supercomplex SCI(1)III(2)IV(1) and megacomplex MCI(2)III(2)IV(2)).</text>
</comment>
<comment type="subcellular location">
    <subcellularLocation>
        <location evidence="1">Mitochondrion inner membrane</location>
        <topology evidence="1">Peripheral membrane protein</topology>
        <orientation evidence="1">Intermembrane side</orientation>
    </subcellularLocation>
</comment>
<comment type="tissue specificity">
    <text evidence="5">Testis specific.</text>
</comment>
<comment type="similarity">
    <text evidence="6">Belongs to the cytochrome c oxidase subunit 6B family.</text>
</comment>
<proteinExistence type="evidence at transcript level"/>